<keyword id="KW-0963">Cytoplasm</keyword>
<keyword id="KW-0648">Protein biosynthesis</keyword>
<keyword id="KW-1185">Reference proteome</keyword>
<gene>
    <name evidence="1" type="primary">frr</name>
    <name type="ordered locus">XOO1973</name>
</gene>
<proteinExistence type="inferred from homology"/>
<protein>
    <recommendedName>
        <fullName evidence="1">Ribosome-recycling factor</fullName>
        <shortName evidence="1">RRF</shortName>
    </recommendedName>
    <alternativeName>
        <fullName evidence="1">Ribosome-releasing factor</fullName>
    </alternativeName>
</protein>
<feature type="chain" id="PRO_0000167584" description="Ribosome-recycling factor">
    <location>
        <begin position="1"/>
        <end position="185"/>
    </location>
</feature>
<reference key="1">
    <citation type="journal article" date="2005" name="Nucleic Acids Res.">
        <title>The genome sequence of Xanthomonas oryzae pathovar oryzae KACC10331, the bacterial blight pathogen of rice.</title>
        <authorList>
            <person name="Lee B.-M."/>
            <person name="Park Y.-J."/>
            <person name="Park D.-S."/>
            <person name="Kang H.-W."/>
            <person name="Kim J.-G."/>
            <person name="Song E.-S."/>
            <person name="Park I.-C."/>
            <person name="Yoon U.-H."/>
            <person name="Hahn J.-H."/>
            <person name="Koo B.-S."/>
            <person name="Lee G.-B."/>
            <person name="Kim H."/>
            <person name="Park H.-S."/>
            <person name="Yoon K.-O."/>
            <person name="Kim J.-H."/>
            <person name="Jung C.-H."/>
            <person name="Koh N.-H."/>
            <person name="Seo J.-S."/>
            <person name="Go S.-J."/>
        </authorList>
    </citation>
    <scope>NUCLEOTIDE SEQUENCE [LARGE SCALE GENOMIC DNA]</scope>
    <source>
        <strain>KACC10331 / KXO85</strain>
    </source>
</reference>
<dbReference type="EMBL" id="AE013598">
    <property type="protein sequence ID" value="AAW75227.1"/>
    <property type="molecule type" value="Genomic_DNA"/>
</dbReference>
<dbReference type="SMR" id="Q5H1E4"/>
<dbReference type="STRING" id="291331.XOO1973"/>
<dbReference type="KEGG" id="xoo:XOO1973"/>
<dbReference type="HOGENOM" id="CLU_073981_2_0_6"/>
<dbReference type="Proteomes" id="UP000006735">
    <property type="component" value="Chromosome"/>
</dbReference>
<dbReference type="GO" id="GO:0005829">
    <property type="term" value="C:cytosol"/>
    <property type="evidence" value="ECO:0007669"/>
    <property type="project" value="GOC"/>
</dbReference>
<dbReference type="GO" id="GO:0043023">
    <property type="term" value="F:ribosomal large subunit binding"/>
    <property type="evidence" value="ECO:0007669"/>
    <property type="project" value="TreeGrafter"/>
</dbReference>
<dbReference type="GO" id="GO:0002184">
    <property type="term" value="P:cytoplasmic translational termination"/>
    <property type="evidence" value="ECO:0007669"/>
    <property type="project" value="TreeGrafter"/>
</dbReference>
<dbReference type="CDD" id="cd00520">
    <property type="entry name" value="RRF"/>
    <property type="match status" value="1"/>
</dbReference>
<dbReference type="FunFam" id="1.10.132.20:FF:000001">
    <property type="entry name" value="Ribosome-recycling factor"/>
    <property type="match status" value="1"/>
</dbReference>
<dbReference type="FunFam" id="3.30.1360.40:FF:000001">
    <property type="entry name" value="Ribosome-recycling factor"/>
    <property type="match status" value="1"/>
</dbReference>
<dbReference type="Gene3D" id="3.30.1360.40">
    <property type="match status" value="1"/>
</dbReference>
<dbReference type="Gene3D" id="1.10.132.20">
    <property type="entry name" value="Ribosome-recycling factor"/>
    <property type="match status" value="1"/>
</dbReference>
<dbReference type="HAMAP" id="MF_00040">
    <property type="entry name" value="RRF"/>
    <property type="match status" value="1"/>
</dbReference>
<dbReference type="InterPro" id="IPR002661">
    <property type="entry name" value="Ribosome_recyc_fac"/>
</dbReference>
<dbReference type="InterPro" id="IPR023584">
    <property type="entry name" value="Ribosome_recyc_fac_dom"/>
</dbReference>
<dbReference type="InterPro" id="IPR036191">
    <property type="entry name" value="RRF_sf"/>
</dbReference>
<dbReference type="NCBIfam" id="TIGR00496">
    <property type="entry name" value="frr"/>
    <property type="match status" value="1"/>
</dbReference>
<dbReference type="PANTHER" id="PTHR20982:SF3">
    <property type="entry name" value="MITOCHONDRIAL RIBOSOME RECYCLING FACTOR PSEUDO 1"/>
    <property type="match status" value="1"/>
</dbReference>
<dbReference type="PANTHER" id="PTHR20982">
    <property type="entry name" value="RIBOSOME RECYCLING FACTOR"/>
    <property type="match status" value="1"/>
</dbReference>
<dbReference type="Pfam" id="PF01765">
    <property type="entry name" value="RRF"/>
    <property type="match status" value="1"/>
</dbReference>
<dbReference type="SUPFAM" id="SSF55194">
    <property type="entry name" value="Ribosome recycling factor, RRF"/>
    <property type="match status" value="1"/>
</dbReference>
<evidence type="ECO:0000255" key="1">
    <source>
        <dbReference type="HAMAP-Rule" id="MF_00040"/>
    </source>
</evidence>
<accession>Q5H1E4</accession>
<name>RRF_XANOR</name>
<comment type="function">
    <text evidence="1">Responsible for the release of ribosomes from messenger RNA at the termination of protein biosynthesis. May increase the efficiency of translation by recycling ribosomes from one round of translation to another.</text>
</comment>
<comment type="subcellular location">
    <subcellularLocation>
        <location evidence="1">Cytoplasm</location>
    </subcellularLocation>
</comment>
<comment type="similarity">
    <text evidence="1">Belongs to the RRF family.</text>
</comment>
<organism>
    <name type="scientific">Xanthomonas oryzae pv. oryzae (strain KACC10331 / KXO85)</name>
    <dbReference type="NCBI Taxonomy" id="291331"/>
    <lineage>
        <taxon>Bacteria</taxon>
        <taxon>Pseudomonadati</taxon>
        <taxon>Pseudomonadota</taxon>
        <taxon>Gammaproteobacteria</taxon>
        <taxon>Lysobacterales</taxon>
        <taxon>Lysobacteraceae</taxon>
        <taxon>Xanthomonas</taxon>
    </lineage>
</organism>
<sequence length="185" mass="20352">MLTQIKQDAQTRMTKSIDALRHSLTTVRTGRASPALLDGIKVKAYGTDTPLNQVASISVSEGRSLVISLFDKGMIKDVEKAIYASDLGLTPTVVGTVIRLNLPPLTEERRKELSKSVHGEGEDSKVAIRNIRRDANQQVKDLLKDKAVTEDEARGAEDDIQKLTDKAIKDVDEVVKAKEQELMTV</sequence>